<sequence>MSVIKMTDLELAGKRVFIRADLNVPVKDGKVTSDARILASLPTIKLCLEAGAKVMVTSHLGRPTEGEYNEEFSLAPVVNYLNDALDCDVKLAKDYLDGLELNAGELVVLENVRFNKGEKKNEEELSKKYAALCDIFVMDAFGTAHRAQASTHGVGMNAPVACAGPLLAAELEALGKAMSNPERPLVAIVGGSKVSTKLTVLESLSKIADQLVVGGGIANTFIAAEGHNVGKSLYEADLVETAQKLMKECAIPVATDVACAKAFDENAEAEIKHVSEVQDDDMIFDLGPDSTAALAEIIGNAKTILWNGPVGVFEFKNFEAGTAGISKAIAESAGFSVAGGGDTLAAIDKFGIKADVSYISTGGGAFLEFVEGKVLPAVAMLEERAKA</sequence>
<protein>
    <recommendedName>
        <fullName evidence="1">Phosphoglycerate kinase</fullName>
        <ecNumber evidence="1">2.7.2.3</ecNumber>
    </recommendedName>
</protein>
<comment type="catalytic activity">
    <reaction evidence="1">
        <text>(2R)-3-phosphoglycerate + ATP = (2R)-3-phospho-glyceroyl phosphate + ADP</text>
        <dbReference type="Rhea" id="RHEA:14801"/>
        <dbReference type="ChEBI" id="CHEBI:30616"/>
        <dbReference type="ChEBI" id="CHEBI:57604"/>
        <dbReference type="ChEBI" id="CHEBI:58272"/>
        <dbReference type="ChEBI" id="CHEBI:456216"/>
        <dbReference type="EC" id="2.7.2.3"/>
    </reaction>
</comment>
<comment type="pathway">
    <text evidence="1">Carbohydrate degradation; glycolysis; pyruvate from D-glyceraldehyde 3-phosphate: step 2/5.</text>
</comment>
<comment type="subunit">
    <text evidence="1">Monomer.</text>
</comment>
<comment type="subcellular location">
    <subcellularLocation>
        <location evidence="1">Cytoplasm</location>
    </subcellularLocation>
</comment>
<comment type="similarity">
    <text evidence="1">Belongs to the phosphoglycerate kinase family.</text>
</comment>
<name>PGK_ALIF1</name>
<dbReference type="EC" id="2.7.2.3" evidence="1"/>
<dbReference type="EMBL" id="CP000020">
    <property type="protein sequence ID" value="AAW84937.1"/>
    <property type="molecule type" value="Genomic_DNA"/>
</dbReference>
<dbReference type="RefSeq" id="WP_011261224.1">
    <property type="nucleotide sequence ID" value="NC_006840.2"/>
</dbReference>
<dbReference type="RefSeq" id="YP_203825.1">
    <property type="nucleotide sequence ID" value="NC_006840.2"/>
</dbReference>
<dbReference type="SMR" id="Q5E7Q9"/>
<dbReference type="STRING" id="312309.VF_0442"/>
<dbReference type="EnsemblBacteria" id="AAW84937">
    <property type="protein sequence ID" value="AAW84937"/>
    <property type="gene ID" value="VF_0442"/>
</dbReference>
<dbReference type="GeneID" id="54163079"/>
<dbReference type="KEGG" id="vfi:VF_0442"/>
<dbReference type="PATRIC" id="fig|312309.11.peg.432"/>
<dbReference type="eggNOG" id="COG0126">
    <property type="taxonomic scope" value="Bacteria"/>
</dbReference>
<dbReference type="HOGENOM" id="CLU_025427_0_2_6"/>
<dbReference type="OrthoDB" id="9808460at2"/>
<dbReference type="UniPathway" id="UPA00109">
    <property type="reaction ID" value="UER00185"/>
</dbReference>
<dbReference type="Proteomes" id="UP000000537">
    <property type="component" value="Chromosome I"/>
</dbReference>
<dbReference type="GO" id="GO:0005829">
    <property type="term" value="C:cytosol"/>
    <property type="evidence" value="ECO:0007669"/>
    <property type="project" value="TreeGrafter"/>
</dbReference>
<dbReference type="GO" id="GO:0043531">
    <property type="term" value="F:ADP binding"/>
    <property type="evidence" value="ECO:0007669"/>
    <property type="project" value="TreeGrafter"/>
</dbReference>
<dbReference type="GO" id="GO:0005524">
    <property type="term" value="F:ATP binding"/>
    <property type="evidence" value="ECO:0007669"/>
    <property type="project" value="UniProtKB-KW"/>
</dbReference>
<dbReference type="GO" id="GO:0004618">
    <property type="term" value="F:phosphoglycerate kinase activity"/>
    <property type="evidence" value="ECO:0007669"/>
    <property type="project" value="UniProtKB-UniRule"/>
</dbReference>
<dbReference type="GO" id="GO:0006094">
    <property type="term" value="P:gluconeogenesis"/>
    <property type="evidence" value="ECO:0007669"/>
    <property type="project" value="TreeGrafter"/>
</dbReference>
<dbReference type="GO" id="GO:0006096">
    <property type="term" value="P:glycolytic process"/>
    <property type="evidence" value="ECO:0007669"/>
    <property type="project" value="UniProtKB-UniRule"/>
</dbReference>
<dbReference type="FunFam" id="3.40.50.1260:FF:000001">
    <property type="entry name" value="Phosphoglycerate kinase"/>
    <property type="match status" value="1"/>
</dbReference>
<dbReference type="FunFam" id="3.40.50.1260:FF:000002">
    <property type="entry name" value="Phosphoglycerate kinase"/>
    <property type="match status" value="1"/>
</dbReference>
<dbReference type="Gene3D" id="3.40.50.1260">
    <property type="entry name" value="Phosphoglycerate kinase, N-terminal domain"/>
    <property type="match status" value="2"/>
</dbReference>
<dbReference type="HAMAP" id="MF_00145">
    <property type="entry name" value="Phosphoglyc_kinase"/>
    <property type="match status" value="1"/>
</dbReference>
<dbReference type="InterPro" id="IPR001576">
    <property type="entry name" value="Phosphoglycerate_kinase"/>
</dbReference>
<dbReference type="InterPro" id="IPR015911">
    <property type="entry name" value="Phosphoglycerate_kinase_CS"/>
</dbReference>
<dbReference type="InterPro" id="IPR015824">
    <property type="entry name" value="Phosphoglycerate_kinase_N"/>
</dbReference>
<dbReference type="InterPro" id="IPR036043">
    <property type="entry name" value="Phosphoglycerate_kinase_sf"/>
</dbReference>
<dbReference type="PANTHER" id="PTHR11406">
    <property type="entry name" value="PHOSPHOGLYCERATE KINASE"/>
    <property type="match status" value="1"/>
</dbReference>
<dbReference type="PANTHER" id="PTHR11406:SF23">
    <property type="entry name" value="PHOSPHOGLYCERATE KINASE 1, CHLOROPLASTIC-RELATED"/>
    <property type="match status" value="1"/>
</dbReference>
<dbReference type="Pfam" id="PF00162">
    <property type="entry name" value="PGK"/>
    <property type="match status" value="1"/>
</dbReference>
<dbReference type="PIRSF" id="PIRSF000724">
    <property type="entry name" value="Pgk"/>
    <property type="match status" value="1"/>
</dbReference>
<dbReference type="PRINTS" id="PR00477">
    <property type="entry name" value="PHGLYCKINASE"/>
</dbReference>
<dbReference type="SUPFAM" id="SSF53748">
    <property type="entry name" value="Phosphoglycerate kinase"/>
    <property type="match status" value="1"/>
</dbReference>
<dbReference type="PROSITE" id="PS00111">
    <property type="entry name" value="PGLYCERATE_KINASE"/>
    <property type="match status" value="1"/>
</dbReference>
<gene>
    <name evidence="1" type="primary">pgk</name>
    <name type="ordered locus">VF_0442</name>
</gene>
<organism>
    <name type="scientific">Aliivibrio fischeri (strain ATCC 700601 / ES114)</name>
    <name type="common">Vibrio fischeri</name>
    <dbReference type="NCBI Taxonomy" id="312309"/>
    <lineage>
        <taxon>Bacteria</taxon>
        <taxon>Pseudomonadati</taxon>
        <taxon>Pseudomonadota</taxon>
        <taxon>Gammaproteobacteria</taxon>
        <taxon>Vibrionales</taxon>
        <taxon>Vibrionaceae</taxon>
        <taxon>Aliivibrio</taxon>
    </lineage>
</organism>
<reference key="1">
    <citation type="journal article" date="2005" name="Proc. Natl. Acad. Sci. U.S.A.">
        <title>Complete genome sequence of Vibrio fischeri: a symbiotic bacterium with pathogenic congeners.</title>
        <authorList>
            <person name="Ruby E.G."/>
            <person name="Urbanowski M."/>
            <person name="Campbell J."/>
            <person name="Dunn A."/>
            <person name="Faini M."/>
            <person name="Gunsalus R."/>
            <person name="Lostroh P."/>
            <person name="Lupp C."/>
            <person name="McCann J."/>
            <person name="Millikan D."/>
            <person name="Schaefer A."/>
            <person name="Stabb E."/>
            <person name="Stevens A."/>
            <person name="Visick K."/>
            <person name="Whistler C."/>
            <person name="Greenberg E.P."/>
        </authorList>
    </citation>
    <scope>NUCLEOTIDE SEQUENCE [LARGE SCALE GENOMIC DNA]</scope>
    <source>
        <strain>ATCC 700601 / ES114</strain>
    </source>
</reference>
<accession>Q5E7Q9</accession>
<keyword id="KW-0067">ATP-binding</keyword>
<keyword id="KW-0963">Cytoplasm</keyword>
<keyword id="KW-0324">Glycolysis</keyword>
<keyword id="KW-0418">Kinase</keyword>
<keyword id="KW-0547">Nucleotide-binding</keyword>
<keyword id="KW-1185">Reference proteome</keyword>
<keyword id="KW-0808">Transferase</keyword>
<feature type="chain" id="PRO_0000146035" description="Phosphoglycerate kinase">
    <location>
        <begin position="1"/>
        <end position="387"/>
    </location>
</feature>
<feature type="binding site" evidence="1">
    <location>
        <begin position="21"/>
        <end position="23"/>
    </location>
    <ligand>
        <name>substrate</name>
    </ligand>
</feature>
<feature type="binding site" evidence="1">
    <location>
        <position position="36"/>
    </location>
    <ligand>
        <name>substrate</name>
    </ligand>
</feature>
<feature type="binding site" evidence="1">
    <location>
        <begin position="59"/>
        <end position="62"/>
    </location>
    <ligand>
        <name>substrate</name>
    </ligand>
</feature>
<feature type="binding site" evidence="1">
    <location>
        <position position="113"/>
    </location>
    <ligand>
        <name>substrate</name>
    </ligand>
</feature>
<feature type="binding site" evidence="1">
    <location>
        <position position="146"/>
    </location>
    <ligand>
        <name>substrate</name>
    </ligand>
</feature>
<feature type="binding site" evidence="1">
    <location>
        <position position="197"/>
    </location>
    <ligand>
        <name>ATP</name>
        <dbReference type="ChEBI" id="CHEBI:30616"/>
    </ligand>
</feature>
<feature type="binding site" evidence="1">
    <location>
        <position position="314"/>
    </location>
    <ligand>
        <name>ATP</name>
        <dbReference type="ChEBI" id="CHEBI:30616"/>
    </ligand>
</feature>
<feature type="binding site" evidence="1">
    <location>
        <begin position="340"/>
        <end position="343"/>
    </location>
    <ligand>
        <name>ATP</name>
        <dbReference type="ChEBI" id="CHEBI:30616"/>
    </ligand>
</feature>
<evidence type="ECO:0000255" key="1">
    <source>
        <dbReference type="HAMAP-Rule" id="MF_00145"/>
    </source>
</evidence>
<proteinExistence type="inferred from homology"/>